<proteinExistence type="evidence at protein level"/>
<sequence>GPEVTFLKXM</sequence>
<dbReference type="InParanoid" id="P82222"/>
<dbReference type="Proteomes" id="UP000005204">
    <property type="component" value="Unassembled WGS sequence"/>
</dbReference>
<keyword id="KW-0903">Direct protein sequencing</keyword>
<keyword id="KW-1185">Reference proteome</keyword>
<protein>
    <recommendedName>
        <fullName>Unknown protein 24 from 2D-PAGE</fullName>
    </recommendedName>
</protein>
<organism>
    <name type="scientific">Bombyx mori</name>
    <name type="common">Silk moth</name>
    <dbReference type="NCBI Taxonomy" id="7091"/>
    <lineage>
        <taxon>Eukaryota</taxon>
        <taxon>Metazoa</taxon>
        <taxon>Ecdysozoa</taxon>
        <taxon>Arthropoda</taxon>
        <taxon>Hexapoda</taxon>
        <taxon>Insecta</taxon>
        <taxon>Pterygota</taxon>
        <taxon>Neoptera</taxon>
        <taxon>Endopterygota</taxon>
        <taxon>Lepidoptera</taxon>
        <taxon>Glossata</taxon>
        <taxon>Ditrysia</taxon>
        <taxon>Bombycoidea</taxon>
        <taxon>Bombycidae</taxon>
        <taxon>Bombycinae</taxon>
        <taxon>Bombyx</taxon>
    </lineage>
</organism>
<accession>P82222</accession>
<name>UP24_BOMMO</name>
<evidence type="ECO:0000269" key="1">
    <source>
    </source>
</evidence>
<evidence type="ECO:0000303" key="2">
    <source>
    </source>
</evidence>
<evidence type="ECO:0000305" key="3"/>
<feature type="chain" id="PRO_0000274543" description="Unknown protein 24 from 2D-PAGE">
    <location>
        <begin position="1"/>
        <end position="10" status="greater than"/>
    </location>
</feature>
<feature type="non-terminal residue" evidence="2">
    <location>
        <position position="10"/>
    </location>
</feature>
<reference evidence="3" key="1">
    <citation type="journal article" date="2001" name="Yi Chuan Xue Bao">
        <title>Protein database for several tissues derived from five instar of silkworm.</title>
        <authorList>
            <person name="Zhong B.-X."/>
        </authorList>
    </citation>
    <scope>PROTEIN SEQUENCE</scope>
    <source>
        <strain evidence="1">Xinhang X Keming</strain>
        <tissue evidence="1">Body wall</tissue>
        <tissue evidence="1">Fat body</tissue>
    </source>
</reference>